<keyword id="KW-0002">3D-structure</keyword>
<keyword id="KW-0007">Acetylation</keyword>
<keyword id="KW-0067">ATP-binding</keyword>
<keyword id="KW-0072">Autophagy</keyword>
<keyword id="KW-0963">Cytoplasm</keyword>
<keyword id="KW-0418">Kinase</keyword>
<keyword id="KW-0547">Nucleotide-binding</keyword>
<keyword id="KW-0597">Phosphoprotein</keyword>
<keyword id="KW-1267">Proteomics identification</keyword>
<keyword id="KW-1185">Reference proteome</keyword>
<keyword id="KW-0723">Serine/threonine-protein kinase</keyword>
<keyword id="KW-0808">Transferase</keyword>
<keyword id="KW-0832">Ubl conjugation</keyword>
<evidence type="ECO:0000250" key="1"/>
<evidence type="ECO:0000250" key="2">
    <source>
        <dbReference type="UniProtKB" id="O70405"/>
    </source>
</evidence>
<evidence type="ECO:0000255" key="3">
    <source>
        <dbReference type="PROSITE-ProRule" id="PRU00159"/>
    </source>
</evidence>
<evidence type="ECO:0000255" key="4">
    <source>
        <dbReference type="PROSITE-ProRule" id="PRU10027"/>
    </source>
</evidence>
<evidence type="ECO:0000256" key="5">
    <source>
        <dbReference type="SAM" id="MobiDB-lite"/>
    </source>
</evidence>
<evidence type="ECO:0000269" key="6">
    <source>
    </source>
</evidence>
<evidence type="ECO:0000269" key="7">
    <source>
    </source>
</evidence>
<evidence type="ECO:0000269" key="8">
    <source>
    </source>
</evidence>
<evidence type="ECO:0000269" key="9">
    <source>
    </source>
</evidence>
<evidence type="ECO:0000269" key="10">
    <source>
    </source>
</evidence>
<evidence type="ECO:0000269" key="11">
    <source>
    </source>
</evidence>
<evidence type="ECO:0000269" key="12">
    <source>
    </source>
</evidence>
<evidence type="ECO:0000269" key="13">
    <source>
    </source>
</evidence>
<evidence type="ECO:0000269" key="14">
    <source>
    </source>
</evidence>
<evidence type="ECO:0000269" key="15">
    <source>
    </source>
</evidence>
<evidence type="ECO:0000269" key="16">
    <source>
    </source>
</evidence>
<evidence type="ECO:0000269" key="17">
    <source>
    </source>
</evidence>
<evidence type="ECO:0000269" key="18">
    <source>
    </source>
</evidence>
<evidence type="ECO:0000269" key="19">
    <source>
    </source>
</evidence>
<evidence type="ECO:0000269" key="20">
    <source>
    </source>
</evidence>
<evidence type="ECO:0000269" key="21">
    <source>
    </source>
</evidence>
<evidence type="ECO:0000269" key="22">
    <source>
    </source>
</evidence>
<evidence type="ECO:0000269" key="23">
    <source>
    </source>
</evidence>
<evidence type="ECO:0000269" key="24">
    <source>
    </source>
</evidence>
<evidence type="ECO:0000269" key="25">
    <source>
    </source>
</evidence>
<evidence type="ECO:0000269" key="26">
    <source>
    </source>
</evidence>
<evidence type="ECO:0000269" key="27">
    <source>
    </source>
</evidence>
<evidence type="ECO:0000269" key="28">
    <source>
    </source>
</evidence>
<evidence type="ECO:0000269" key="29">
    <source>
    </source>
</evidence>
<evidence type="ECO:0000269" key="30">
    <source>
    </source>
</evidence>
<evidence type="ECO:0000269" key="31">
    <source>
    </source>
</evidence>
<evidence type="ECO:0000269" key="32">
    <source>
    </source>
</evidence>
<evidence type="ECO:0000269" key="33">
    <source>
    </source>
</evidence>
<evidence type="ECO:0000269" key="34">
    <source>
    </source>
</evidence>
<evidence type="ECO:0000269" key="35">
    <source>
    </source>
</evidence>
<evidence type="ECO:0000303" key="36">
    <source>
    </source>
</evidence>
<evidence type="ECO:0000303" key="37">
    <source>
    </source>
</evidence>
<evidence type="ECO:0000303" key="38">
    <source>
    </source>
</evidence>
<evidence type="ECO:0000305" key="39"/>
<evidence type="ECO:0000305" key="40">
    <source>
    </source>
</evidence>
<evidence type="ECO:0000305" key="41">
    <source>
    </source>
</evidence>
<evidence type="ECO:0000312" key="42">
    <source>
        <dbReference type="HGNC" id="HGNC:12558"/>
    </source>
</evidence>
<evidence type="ECO:0007744" key="43">
    <source>
    </source>
</evidence>
<evidence type="ECO:0007744" key="44">
    <source>
    </source>
</evidence>
<evidence type="ECO:0007744" key="45">
    <source>
    </source>
</evidence>
<evidence type="ECO:0007744" key="46">
    <source>
    </source>
</evidence>
<evidence type="ECO:0007744" key="47">
    <source>
    </source>
</evidence>
<evidence type="ECO:0007744" key="48">
    <source>
    </source>
</evidence>
<evidence type="ECO:0007829" key="49">
    <source>
        <dbReference type="PDB" id="4WNO"/>
    </source>
</evidence>
<evidence type="ECO:0007829" key="50">
    <source>
        <dbReference type="PDB" id="4WNP"/>
    </source>
</evidence>
<evidence type="ECO:0007829" key="51">
    <source>
        <dbReference type="PDB" id="6MNH"/>
    </source>
</evidence>
<organism>
    <name type="scientific">Homo sapiens</name>
    <name type="common">Human</name>
    <dbReference type="NCBI Taxonomy" id="9606"/>
    <lineage>
        <taxon>Eukaryota</taxon>
        <taxon>Metazoa</taxon>
        <taxon>Chordata</taxon>
        <taxon>Craniata</taxon>
        <taxon>Vertebrata</taxon>
        <taxon>Euteleostomi</taxon>
        <taxon>Mammalia</taxon>
        <taxon>Eutheria</taxon>
        <taxon>Euarchontoglires</taxon>
        <taxon>Primates</taxon>
        <taxon>Haplorrhini</taxon>
        <taxon>Catarrhini</taxon>
        <taxon>Hominidae</taxon>
        <taxon>Homo</taxon>
    </lineage>
</organism>
<reference key="1">
    <citation type="journal article" date="1998" name="Genomics">
        <title>Human ULK1, a novel serine/threonine kinase related to UNC-51 kinase of Caenorhabditis elegans: cDNA cloning, expression, and chromosomal assignment.</title>
        <authorList>
            <person name="Kuroyanagi H."/>
            <person name="Yan J."/>
            <person name="Seki N."/>
            <person name="Yamanouchi Y."/>
            <person name="Suzuki Y."/>
            <person name="Takano T."/>
            <person name="Muramatsu M."/>
            <person name="Shirasawa T."/>
        </authorList>
    </citation>
    <scope>NUCLEOTIDE SEQUENCE [MRNA]</scope>
    <scope>VARIANT ALA-816</scope>
</reference>
<reference key="2">
    <citation type="journal article" date="1998" name="DNA Res.">
        <title>Prediction of the coding sequences of unidentified human genes. XI. The complete sequences of 100 new cDNA clones from brain which code for large proteins in vitro.</title>
        <authorList>
            <person name="Nagase T."/>
            <person name="Ishikawa K."/>
            <person name="Suyama M."/>
            <person name="Kikuno R."/>
            <person name="Miyajima N."/>
            <person name="Tanaka A."/>
            <person name="Kotani H."/>
            <person name="Nomura N."/>
            <person name="Ohara O."/>
        </authorList>
    </citation>
    <scope>NUCLEOTIDE SEQUENCE [LARGE SCALE MRNA]</scope>
    <scope>VARIANT ALA-816</scope>
    <source>
        <tissue>Brain</tissue>
    </source>
</reference>
<reference key="3">
    <citation type="journal article" date="2002" name="DNA Res.">
        <title>Construction of expression-ready cDNA clones for KIAA genes: manual curation of 330 KIAA cDNA clones.</title>
        <authorList>
            <person name="Nakajima D."/>
            <person name="Okazaki N."/>
            <person name="Yamakawa H."/>
            <person name="Kikuno R."/>
            <person name="Ohara O."/>
            <person name="Nagase T."/>
        </authorList>
    </citation>
    <scope>SEQUENCE REVISION</scope>
</reference>
<reference key="4">
    <citation type="journal article" date="2006" name="Nature">
        <title>The finished DNA sequence of human chromosome 12.</title>
        <authorList>
            <person name="Scherer S.E."/>
            <person name="Muzny D.M."/>
            <person name="Buhay C.J."/>
            <person name="Chen R."/>
            <person name="Cree A."/>
            <person name="Ding Y."/>
            <person name="Dugan-Rocha S."/>
            <person name="Gill R."/>
            <person name="Gunaratne P."/>
            <person name="Harris R.A."/>
            <person name="Hawes A.C."/>
            <person name="Hernandez J."/>
            <person name="Hodgson A.V."/>
            <person name="Hume J."/>
            <person name="Jackson A."/>
            <person name="Khan Z.M."/>
            <person name="Kovar-Smith C."/>
            <person name="Lewis L.R."/>
            <person name="Lozado R.J."/>
            <person name="Metzker M.L."/>
            <person name="Milosavljevic A."/>
            <person name="Miner G.R."/>
            <person name="Montgomery K.T."/>
            <person name="Morgan M.B."/>
            <person name="Nazareth L.V."/>
            <person name="Scott G."/>
            <person name="Sodergren E."/>
            <person name="Song X.-Z."/>
            <person name="Steffen D."/>
            <person name="Lovering R.C."/>
            <person name="Wheeler D.A."/>
            <person name="Worley K.C."/>
            <person name="Yuan Y."/>
            <person name="Zhang Z."/>
            <person name="Adams C.Q."/>
            <person name="Ansari-Lari M.A."/>
            <person name="Ayele M."/>
            <person name="Brown M.J."/>
            <person name="Chen G."/>
            <person name="Chen Z."/>
            <person name="Clerc-Blankenburg K.P."/>
            <person name="Davis C."/>
            <person name="Delgado O."/>
            <person name="Dinh H.H."/>
            <person name="Draper H."/>
            <person name="Gonzalez-Garay M.L."/>
            <person name="Havlak P."/>
            <person name="Jackson L.R."/>
            <person name="Jacob L.S."/>
            <person name="Kelly S.H."/>
            <person name="Li L."/>
            <person name="Li Z."/>
            <person name="Liu J."/>
            <person name="Liu W."/>
            <person name="Lu J."/>
            <person name="Maheshwari M."/>
            <person name="Nguyen B.-V."/>
            <person name="Okwuonu G.O."/>
            <person name="Pasternak S."/>
            <person name="Perez L.M."/>
            <person name="Plopper F.J.H."/>
            <person name="Santibanez J."/>
            <person name="Shen H."/>
            <person name="Tabor P.E."/>
            <person name="Verduzco D."/>
            <person name="Waldron L."/>
            <person name="Wang Q."/>
            <person name="Williams G.A."/>
            <person name="Zhang J."/>
            <person name="Zhou J."/>
            <person name="Allen C.C."/>
            <person name="Amin A.G."/>
            <person name="Anyalebechi V."/>
            <person name="Bailey M."/>
            <person name="Barbaria J.A."/>
            <person name="Bimage K.E."/>
            <person name="Bryant N.P."/>
            <person name="Burch P.E."/>
            <person name="Burkett C.E."/>
            <person name="Burrell K.L."/>
            <person name="Calderon E."/>
            <person name="Cardenas V."/>
            <person name="Carter K."/>
            <person name="Casias K."/>
            <person name="Cavazos I."/>
            <person name="Cavazos S.R."/>
            <person name="Ceasar H."/>
            <person name="Chacko J."/>
            <person name="Chan S.N."/>
            <person name="Chavez D."/>
            <person name="Christopoulos C."/>
            <person name="Chu J."/>
            <person name="Cockrell R."/>
            <person name="Cox C.D."/>
            <person name="Dang M."/>
            <person name="Dathorne S.R."/>
            <person name="David R."/>
            <person name="Davis C.M."/>
            <person name="Davy-Carroll L."/>
            <person name="Deshazo D.R."/>
            <person name="Donlin J.E."/>
            <person name="D'Souza L."/>
            <person name="Eaves K.A."/>
            <person name="Egan A."/>
            <person name="Emery-Cohen A.J."/>
            <person name="Escotto M."/>
            <person name="Flagg N."/>
            <person name="Forbes L.D."/>
            <person name="Gabisi A.M."/>
            <person name="Garza M."/>
            <person name="Hamilton C."/>
            <person name="Henderson N."/>
            <person name="Hernandez O."/>
            <person name="Hines S."/>
            <person name="Hogues M.E."/>
            <person name="Huang M."/>
            <person name="Idlebird D.G."/>
            <person name="Johnson R."/>
            <person name="Jolivet A."/>
            <person name="Jones S."/>
            <person name="Kagan R."/>
            <person name="King L.M."/>
            <person name="Leal B."/>
            <person name="Lebow H."/>
            <person name="Lee S."/>
            <person name="LeVan J.M."/>
            <person name="Lewis L.C."/>
            <person name="London P."/>
            <person name="Lorensuhewa L.M."/>
            <person name="Loulseged H."/>
            <person name="Lovett D.A."/>
            <person name="Lucier A."/>
            <person name="Lucier R.L."/>
            <person name="Ma J."/>
            <person name="Madu R.C."/>
            <person name="Mapua P."/>
            <person name="Martindale A.D."/>
            <person name="Martinez E."/>
            <person name="Massey E."/>
            <person name="Mawhiney S."/>
            <person name="Meador M.G."/>
            <person name="Mendez S."/>
            <person name="Mercado C."/>
            <person name="Mercado I.C."/>
            <person name="Merritt C.E."/>
            <person name="Miner Z.L."/>
            <person name="Minja E."/>
            <person name="Mitchell T."/>
            <person name="Mohabbat F."/>
            <person name="Mohabbat K."/>
            <person name="Montgomery B."/>
            <person name="Moore N."/>
            <person name="Morris S."/>
            <person name="Munidasa M."/>
            <person name="Ngo R.N."/>
            <person name="Nguyen N.B."/>
            <person name="Nickerson E."/>
            <person name="Nwaokelemeh O.O."/>
            <person name="Nwokenkwo S."/>
            <person name="Obregon M."/>
            <person name="Oguh M."/>
            <person name="Oragunye N."/>
            <person name="Oviedo R.J."/>
            <person name="Parish B.J."/>
            <person name="Parker D.N."/>
            <person name="Parrish J."/>
            <person name="Parks K.L."/>
            <person name="Paul H.A."/>
            <person name="Payton B.A."/>
            <person name="Perez A."/>
            <person name="Perrin W."/>
            <person name="Pickens A."/>
            <person name="Primus E.L."/>
            <person name="Pu L.-L."/>
            <person name="Puazo M."/>
            <person name="Quiles M.M."/>
            <person name="Quiroz J.B."/>
            <person name="Rabata D."/>
            <person name="Reeves K."/>
            <person name="Ruiz S.J."/>
            <person name="Shao H."/>
            <person name="Sisson I."/>
            <person name="Sonaike T."/>
            <person name="Sorelle R.P."/>
            <person name="Sutton A.E."/>
            <person name="Svatek A.F."/>
            <person name="Svetz L.A."/>
            <person name="Tamerisa K.S."/>
            <person name="Taylor T.R."/>
            <person name="Teague B."/>
            <person name="Thomas N."/>
            <person name="Thorn R.D."/>
            <person name="Trejos Z.Y."/>
            <person name="Trevino B.K."/>
            <person name="Ukegbu O.N."/>
            <person name="Urban J.B."/>
            <person name="Vasquez L.I."/>
            <person name="Vera V.A."/>
            <person name="Villasana D.M."/>
            <person name="Wang L."/>
            <person name="Ward-Moore S."/>
            <person name="Warren J.T."/>
            <person name="Wei X."/>
            <person name="White F."/>
            <person name="Williamson A.L."/>
            <person name="Wleczyk R."/>
            <person name="Wooden H.S."/>
            <person name="Wooden S.H."/>
            <person name="Yen J."/>
            <person name="Yoon L."/>
            <person name="Yoon V."/>
            <person name="Zorrilla S.E."/>
            <person name="Nelson D."/>
            <person name="Kucherlapati R."/>
            <person name="Weinstock G."/>
            <person name="Gibbs R.A."/>
        </authorList>
    </citation>
    <scope>NUCLEOTIDE SEQUENCE [LARGE SCALE GENOMIC DNA]</scope>
</reference>
<reference key="5">
    <citation type="journal article" date="2000" name="Brain Res. Mol. Brain Res.">
        <title>Interaction of the Unc-51-like kinase and microtubule-associated protein light chain 3 related proteins in the brain: possible role of vesicular transport in axonal elongation.</title>
        <authorList>
            <person name="Okazaki N."/>
            <person name="Yan J."/>
            <person name="Yuasa S."/>
            <person name="Ueno T."/>
            <person name="Kominami E."/>
            <person name="Masuho Y."/>
            <person name="Koga H."/>
            <person name="Muramatsu M.-A."/>
        </authorList>
    </citation>
    <scope>FUNCTION</scope>
    <scope>INTERACTION WITH GABARAP AND GABARAPL2</scope>
    <scope>REGION</scope>
</reference>
<reference key="6">
    <citation type="journal article" date="2008" name="Mol. Cell">
        <title>Kinase-selective enrichment enables quantitative phosphoproteomics of the kinome across the cell cycle.</title>
        <authorList>
            <person name="Daub H."/>
            <person name="Olsen J.V."/>
            <person name="Bairlein M."/>
            <person name="Gnad F."/>
            <person name="Oppermann F.S."/>
            <person name="Korner R."/>
            <person name="Greff Z."/>
            <person name="Keri G."/>
            <person name="Stemmann O."/>
            <person name="Mann M."/>
        </authorList>
    </citation>
    <scope>PHOSPHORYLATION [LARGE SCALE ANALYSIS] AT SER-477 AND SER-479</scope>
    <scope>IDENTIFICATION BY MASS SPECTROMETRY [LARGE SCALE ANALYSIS]</scope>
    <source>
        <tissue>Cervix carcinoma</tissue>
    </source>
</reference>
<reference key="7">
    <citation type="journal article" date="2008" name="Proc. Natl. Acad. Sci. U.S.A.">
        <title>A quantitative atlas of mitotic phosphorylation.</title>
        <authorList>
            <person name="Dephoure N."/>
            <person name="Zhou C."/>
            <person name="Villen J."/>
            <person name="Beausoleil S.A."/>
            <person name="Bakalarski C.E."/>
            <person name="Elledge S.J."/>
            <person name="Gygi S.P."/>
        </authorList>
    </citation>
    <scope>PHOSPHORYLATION [LARGE SCALE ANALYSIS] AT SER-450; THR-456 AND SER-556</scope>
    <scope>IDENTIFICATION BY MASS SPECTROMETRY [LARGE SCALE ANALYSIS]</scope>
    <source>
        <tissue>Cervix carcinoma</tissue>
    </source>
</reference>
<reference key="8">
    <citation type="journal article" date="2009" name="Anal. Chem.">
        <title>Lys-N and trypsin cover complementary parts of the phosphoproteome in a refined SCX-based approach.</title>
        <authorList>
            <person name="Gauci S."/>
            <person name="Helbig A.O."/>
            <person name="Slijper M."/>
            <person name="Krijgsveld J."/>
            <person name="Heck A.J."/>
            <person name="Mohammed S."/>
        </authorList>
    </citation>
    <scope>IDENTIFICATION BY MASS SPECTROMETRY [LARGE SCALE ANALYSIS]</scope>
</reference>
<reference key="9">
    <citation type="journal article" date="2009" name="Autophagy">
        <title>A novel, human Atg13 binding protein, Atg101, interacts with ULK1 and is essential for macroautophagy.</title>
        <authorList>
            <person name="Mercer C.A."/>
            <person name="Kaliappan A."/>
            <person name="Dennis P.B."/>
        </authorList>
    </citation>
    <scope>SUBUNIT</scope>
    <scope>COMPLEX FORMATION WITH ATG13; ATG101 AND RB1CC1</scope>
</reference>
<reference key="10">
    <citation type="journal article" date="2009" name="Autophagy">
        <title>Atg101, a novel mammalian autophagy protein interacting with Atg13.</title>
        <authorList>
            <person name="Hosokawa N."/>
            <person name="Sasaki T."/>
            <person name="Iemura S.I."/>
            <person name="Natsume T."/>
            <person name="Hara T."/>
            <person name="Mizushima N."/>
        </authorList>
    </citation>
    <scope>SUBUNIT</scope>
</reference>
<reference key="11">
    <citation type="journal article" date="2009" name="Mol. Biol. Cell">
        <title>Nutrient-dependent mTORC1 association with the ULK1-Atg13-FIP200 complex required for autophagy.</title>
        <authorList>
            <person name="Hosokawa N."/>
            <person name="Hara T."/>
            <person name="Kaizuka T."/>
            <person name="Kishi C."/>
            <person name="Takamura A."/>
            <person name="Miura Y."/>
            <person name="Iemura S."/>
            <person name="Natsume T."/>
            <person name="Takehana K."/>
            <person name="Yamada N."/>
            <person name="Guan J.L."/>
            <person name="Oshiro N."/>
            <person name="Mizushima N."/>
        </authorList>
    </citation>
    <scope>SUBUNIT</scope>
    <scope>INTERACTION WITH RPTOR AND TORC1 COMPLEX</scope>
</reference>
<reference key="12">
    <citation type="journal article" date="2009" name="Mol. Cell. Biol.">
        <title>Kinase-inactivated ULK proteins inhibit autophagy via their conserved C-terminal domains using an Atg13-independent mechanism.</title>
        <authorList>
            <person name="Chan E.Y.W."/>
            <person name="Longatti A."/>
            <person name="McKnight N.C."/>
            <person name="Tooze S.A."/>
        </authorList>
    </citation>
    <scope>FUNCTION</scope>
    <scope>CATALYTIC ACTIVITY</scope>
    <scope>INTERACTION WITH ATG13</scope>
</reference>
<reference key="13">
    <citation type="journal article" date="2009" name="Mol. Cell. Proteomics">
        <title>Large-scale proteomics analysis of the human kinome.</title>
        <authorList>
            <person name="Oppermann F.S."/>
            <person name="Gnad F."/>
            <person name="Olsen J.V."/>
            <person name="Hornberger R."/>
            <person name="Greff Z."/>
            <person name="Keri G."/>
            <person name="Mann M."/>
            <person name="Daub H."/>
        </authorList>
    </citation>
    <scope>IDENTIFICATION BY MASS SPECTROMETRY [LARGE SCALE ANALYSIS]</scope>
</reference>
<reference key="14">
    <citation type="journal article" date="2009" name="Sci. Signal.">
        <title>Quantitative phosphoproteomic analysis of T cell receptor signaling reveals system-wide modulation of protein-protein interactions.</title>
        <authorList>
            <person name="Mayya V."/>
            <person name="Lundgren D.H."/>
            <person name="Hwang S.-I."/>
            <person name="Rezaul K."/>
            <person name="Wu L."/>
            <person name="Eng J.K."/>
            <person name="Rodionov V."/>
            <person name="Han D.K."/>
        </authorList>
    </citation>
    <scope>PHOSPHORYLATION [LARGE SCALE ANALYSIS] AT SER-450 AND SER-638</scope>
    <scope>IDENTIFICATION BY MASS SPECTROMETRY [LARGE SCALE ANALYSIS]</scope>
    <source>
        <tissue>Leukemic T-cell</tissue>
    </source>
</reference>
<reference key="15">
    <citation type="journal article" date="2010" name="J. Cell Biol.">
        <title>The dynamic interaction of AMBRA1 with the dynein motor complex regulates mammalian autophagy.</title>
        <authorList>
            <person name="Di Bartolomeo S."/>
            <person name="Corazzari M."/>
            <person name="Nazio F."/>
            <person name="Oliverio S."/>
            <person name="Lisi G."/>
            <person name="Antonioli M."/>
            <person name="Pagliarini V."/>
            <person name="Matteoni S."/>
            <person name="Fuoco C."/>
            <person name="Giunta L."/>
            <person name="D'Amelio M."/>
            <person name="Nardacci R."/>
            <person name="Romagnoli A."/>
            <person name="Piacentini M."/>
            <person name="Cecconi F."/>
            <person name="Fimia G.M."/>
        </authorList>
    </citation>
    <scope>FUNCTION</scope>
    <scope>MUTAGENESIS OF LYS-46</scope>
</reference>
<reference key="16">
    <citation type="journal article" date="2010" name="Sci. Signal.">
        <title>Quantitative phosphoproteomics reveals widespread full phosphorylation site occupancy during mitosis.</title>
        <authorList>
            <person name="Olsen J.V."/>
            <person name="Vermeulen M."/>
            <person name="Santamaria A."/>
            <person name="Kumar C."/>
            <person name="Miller M.L."/>
            <person name="Jensen L.J."/>
            <person name="Gnad F."/>
            <person name="Cox J."/>
            <person name="Jensen T.S."/>
            <person name="Nigg E.A."/>
            <person name="Brunak S."/>
            <person name="Mann M."/>
        </authorList>
    </citation>
    <scope>PHOSPHORYLATION [LARGE SCALE ANALYSIS] AT SER-450; THR-456 AND SER-638</scope>
    <scope>IDENTIFICATION BY MASS SPECTROMETRY [LARGE SCALE ANALYSIS]</scope>
    <source>
        <tissue>Cervix carcinoma</tissue>
    </source>
</reference>
<reference key="17">
    <citation type="journal article" date="2011" name="Autophagy">
        <title>Ulk1-mediated phosphorylation of AMPK constitutes a negative regulatory feedback loop.</title>
        <authorList>
            <person name="Loffler A.S."/>
            <person name="Alers S."/>
            <person name="Dieterle A.M."/>
            <person name="Keppeler H."/>
            <person name="Franz-Wachtel M."/>
            <person name="Kundu M."/>
            <person name="Campbell D.G."/>
            <person name="Wesselborg S."/>
            <person name="Alessi D.R."/>
            <person name="Stork B."/>
        </authorList>
    </citation>
    <scope>FUNCTION IN PHOSPHORYLATION OF AMPK</scope>
</reference>
<reference key="18">
    <citation type="journal article" date="2011" name="Autophagy">
        <title>ULK1 inhibits the kinase activity of mTORC1 and cell proliferation.</title>
        <authorList>
            <person name="Jung C.H."/>
            <person name="Seo M."/>
            <person name="Otto N.M."/>
            <person name="Kim D.H."/>
        </authorList>
    </citation>
    <scope>FUNCTION</scope>
    <scope>INTERACTION WITH RPTOR</scope>
</reference>
<reference key="19">
    <citation type="journal article" date="2011" name="Sci. Signal.">
        <title>System-wide temporal characterization of the proteome and phosphoproteome of human embryonic stem cell differentiation.</title>
        <authorList>
            <person name="Rigbolt K.T."/>
            <person name="Prokhorova T.A."/>
            <person name="Akimov V."/>
            <person name="Henningsen J."/>
            <person name="Johansen P.T."/>
            <person name="Kratchmarova I."/>
            <person name="Kassem M."/>
            <person name="Mann M."/>
            <person name="Olsen J.V."/>
            <person name="Blagoev B."/>
        </authorList>
    </citation>
    <scope>PHOSPHORYLATION [LARGE SCALE ANALYSIS] AT SER-450; SER-469; SER-556 AND SER-638</scope>
    <scope>IDENTIFICATION BY MASS SPECTROMETRY [LARGE SCALE ANALYSIS]</scope>
</reference>
<reference key="20">
    <citation type="journal article" date="2011" name="Science">
        <title>Phosphorylation of ULK1 (hATG1) by AMP-activated protein kinase connects energy sensing to mitophagy.</title>
        <authorList>
            <person name="Egan D.F."/>
            <person name="Shackelford D.B."/>
            <person name="Mihaylova M.M."/>
            <person name="Gelino S."/>
            <person name="Kohnz R.A."/>
            <person name="Mair W."/>
            <person name="Vasquez D.S."/>
            <person name="Joshi A."/>
            <person name="Gwinn D.M."/>
            <person name="Taylor R."/>
            <person name="Asara J.M."/>
            <person name="Fitzpatrick J."/>
            <person name="Dillin A."/>
            <person name="Viollet B."/>
            <person name="Kundu M."/>
            <person name="Hansen M."/>
            <person name="Shaw R.J."/>
        </authorList>
    </citation>
    <scope>PHOSPHORYLATION BY AMPK</scope>
</reference>
<reference key="21">
    <citation type="journal article" date="2012" name="EMBO J.">
        <title>Genome-wide siRNA screen reveals amino acid starvation-induced autophagy requires SCOC and WAC.</title>
        <authorList>
            <person name="McKnight N.C."/>
            <person name="Jefferies H.B."/>
            <person name="Alemu E.A."/>
            <person name="Saunders R.E."/>
            <person name="Howell M."/>
            <person name="Johansen T."/>
            <person name="Tooze S.A."/>
        </authorList>
    </citation>
    <scope>INTERACTION WITH FEZ1</scope>
</reference>
<reference key="22">
    <citation type="journal article" date="2012" name="J. Cell Biol.">
        <title>TBC1D14 regulates autophagosome formation via Rab11- and ULK1-positive recycling endosomes.</title>
        <authorList>
            <person name="Longatti A."/>
            <person name="Lamb C.A."/>
            <person name="Razi M."/>
            <person name="Yoshimura S."/>
            <person name="Barr F.A."/>
            <person name="Tooze S.A."/>
        </authorList>
    </citation>
    <scope>INTERACTION WITH TBC1D14</scope>
</reference>
<reference key="23">
    <citation type="journal article" date="2013" name="J. Proteome Res.">
        <title>Toward a comprehensive characterization of a human cancer cell phosphoproteome.</title>
        <authorList>
            <person name="Zhou H."/>
            <person name="Di Palma S."/>
            <person name="Preisinger C."/>
            <person name="Peng M."/>
            <person name="Polat A.N."/>
            <person name="Heck A.J."/>
            <person name="Mohammed S."/>
        </authorList>
    </citation>
    <scope>PHOSPHORYLATION [LARGE SCALE ANALYSIS] AT SER-403; SER-450; SER-467; SER-469; SER-477; SER-479; SER-556; SER-638; SER-758 AND SER-775</scope>
    <scope>IDENTIFICATION BY MASS SPECTROMETRY [LARGE SCALE ANALYSIS]</scope>
    <source>
        <tissue>Cervix carcinoma</tissue>
        <tissue>Erythroleukemia</tissue>
    </source>
</reference>
<reference key="24">
    <citation type="journal article" date="2013" name="Nat. Cell Biol.">
        <title>mTOR inhibits autophagy by controlling ULK1 ubiquitylation, self-association and function through AMBRA1 and TRAF6.</title>
        <authorList>
            <person name="Nazio F."/>
            <person name="Strappazzon F."/>
            <person name="Antonioli M."/>
            <person name="Bielli P."/>
            <person name="Cianfanelli V."/>
            <person name="Bordi M."/>
            <person name="Gretzmeier C."/>
            <person name="Dengjel J."/>
            <person name="Piacentini M."/>
            <person name="Fimia G.M."/>
            <person name="Cecconi F."/>
        </authorList>
    </citation>
    <scope>FUNCTION</scope>
    <scope>UBIQUITINATION</scope>
</reference>
<reference key="25">
    <citation type="journal article" date="2014" name="Autophagy">
        <title>FLCN, a novel autophagy component, interacts with GABARAP and is regulated by ULK1 phosphorylation.</title>
        <authorList>
            <person name="Dunlop E.A."/>
            <person name="Seifan S."/>
            <person name="Claessens T."/>
            <person name="Behrends C."/>
            <person name="Kamps M.A."/>
            <person name="Rozycka E."/>
            <person name="Kemp A.J."/>
            <person name="Nookala R.K."/>
            <person name="Blenis J."/>
            <person name="Coull B.J."/>
            <person name="Murray J.T."/>
            <person name="van Steensel M.A."/>
            <person name="Wilkinson S."/>
            <person name="Tee A.R."/>
        </authorList>
    </citation>
    <scope>FUNCTION</scope>
    <scope>CATALYTIC ACTIVITY</scope>
</reference>
<reference key="26">
    <citation type="journal article" date="2014" name="Cell Rep.">
        <title>A mitochondrial RNAi screen defines cellular bioenergetic determinants and identifies an adenylate kinase as a key regulator of ATP levels.</title>
        <authorList>
            <person name="Lanning N.J."/>
            <person name="Looyenga B.D."/>
            <person name="Kauffman A.L."/>
            <person name="Niemi N.M."/>
            <person name="Sudderth J."/>
            <person name="DeBerardinis R.J."/>
            <person name="MacKeigan J.P."/>
        </authorList>
    </citation>
    <scope>PHOSPHORYLATION AT SER-556</scope>
</reference>
<reference key="27">
    <citation type="journal article" date="2014" name="FEBS J.">
        <title>Sestrin2 promotes Unc-51-like kinase 1 mediated phosphorylation of p62/sequestosome-1.</title>
        <authorList>
            <person name="Ro S.H."/>
            <person name="Semple I.A."/>
            <person name="Park H."/>
            <person name="Park H."/>
            <person name="Park H.W."/>
            <person name="Kim M."/>
            <person name="Kim J.S."/>
            <person name="Lee J.H."/>
        </authorList>
    </citation>
    <scope>FUNCTION</scope>
    <scope>INTERACTION WITH SESN2 AND SQSTM1</scope>
    <scope>REGION</scope>
</reference>
<reference key="28">
    <citation type="journal article" date="2014" name="Dev. Cell">
        <title>TRIM proteins regulate autophagy and can target autophagic substrates by direct recognition.</title>
        <authorList>
            <person name="Mandell M.A."/>
            <person name="Jain A."/>
            <person name="Arko-Mensah J."/>
            <person name="Chauhan S."/>
            <person name="Kimura T."/>
            <person name="Dinkins C."/>
            <person name="Silvestri G."/>
            <person name="Munch J."/>
            <person name="Kirchhoff F."/>
            <person name="Simonsen A."/>
            <person name="Wei Y."/>
            <person name="Levine B."/>
            <person name="Johansen T."/>
            <person name="Deretic V."/>
        </authorList>
    </citation>
    <scope>INTERACTION WITH TRIM5</scope>
</reference>
<reference key="29">
    <citation type="journal article" date="2015" name="J. Cell Biol.">
        <title>TRIM-mediated precision autophagy targets cytoplasmic regulators of innate immunity.</title>
        <authorList>
            <person name="Kimura T."/>
            <person name="Jain A."/>
            <person name="Choi S.W."/>
            <person name="Mandell M.A."/>
            <person name="Schroder K."/>
            <person name="Johansen T."/>
            <person name="Deretic V."/>
        </authorList>
    </citation>
    <scope>INTERACTION WITH BECN1; IRF3; MEFV AND TRIM21</scope>
</reference>
<reference key="30">
    <citation type="journal article" date="2015" name="Mol. Cell">
        <title>IRGM governs the core autophagy machinery to conduct antimicrobial defense.</title>
        <authorList>
            <person name="Chauhan S."/>
            <person name="Mandell M.A."/>
            <person name="Deretic V."/>
        </authorList>
    </citation>
    <scope>INTERACTION WITH IRGM</scope>
    <scope>PHOSPHORYLATION AT SER-317 AND SER-556</scope>
</reference>
<reference key="31">
    <citation type="journal article" date="2015" name="Nat. Cell Biol.">
        <title>AMBRA1 links autophagy to cell proliferation and tumorigenesis by promoting c-Myc dephosphorylation and degradation.</title>
        <authorList>
            <person name="Cianfanelli V."/>
            <person name="Fuoco C."/>
            <person name="Lorente M."/>
            <person name="Salazar M."/>
            <person name="Quondamatteo F."/>
            <person name="Gherardini P.F."/>
            <person name="De Zio D."/>
            <person name="Nazio F."/>
            <person name="Antonioli M."/>
            <person name="D'Orazio M."/>
            <person name="Skobo T."/>
            <person name="Bordi M."/>
            <person name="Rohde M."/>
            <person name="Dalla Valle L."/>
            <person name="Helmer-Citterich M."/>
            <person name="Gretzmeier C."/>
            <person name="Dengjel J."/>
            <person name="Fimia G.M."/>
            <person name="Piacentini M."/>
            <person name="Di Bartolomeo S."/>
            <person name="Velasco G."/>
            <person name="Cecconi F."/>
        </authorList>
    </citation>
    <scope>INTERACTION WITH AMBRA1</scope>
</reference>
<reference key="32">
    <citation type="journal article" date="2015" name="Nat. Cell Biol.">
        <authorList>
            <person name="Cianfanelli V."/>
            <person name="Fuoco C."/>
            <person name="Lorente M."/>
            <person name="Salazar M."/>
            <person name="Quondamatteo F."/>
            <person name="Gherardini P.F."/>
            <person name="De Zio D."/>
            <person name="Nazio F."/>
            <person name="Antonioli M."/>
            <person name="D'Orazio M."/>
            <person name="Skobo T."/>
            <person name="Bordi M."/>
            <person name="Rohde M."/>
            <person name="Dalla Valle L."/>
            <person name="Helmer-Citterich M."/>
            <person name="Gretzmeier C."/>
            <person name="Dengjel J."/>
            <person name="Fimia G.M."/>
            <person name="Piacentini M."/>
            <person name="Di Bartolomeo S."/>
            <person name="Velasco G."/>
            <person name="Cecconi F."/>
        </authorList>
    </citation>
    <scope>ERRATUM OF PUBMED:25438055</scope>
</reference>
<reference key="33">
    <citation type="journal article" date="2016" name="EMBO J.">
        <title>The C9orf72 protein interacts with Rab1a and the ULK1 complex to regulate initiation of autophagy.</title>
        <authorList>
            <person name="Webster C.P."/>
            <person name="Smith E.F."/>
            <person name="Bauer C.S."/>
            <person name="Moller A."/>
            <person name="Hautbergue G.M."/>
            <person name="Ferraiuolo L."/>
            <person name="Myszczynska M.A."/>
            <person name="Higginbottom A."/>
            <person name="Walsh M.J."/>
            <person name="Whitworth A.J."/>
            <person name="Kaspar B.K."/>
            <person name="Meyer K."/>
            <person name="Shaw P.J."/>
            <person name="Grierson A.J."/>
            <person name="De Vos K.J."/>
        </authorList>
    </citation>
    <scope>INTERACTION WITH C9ORF72</scope>
</reference>
<reference key="34">
    <citation type="journal article" date="2017" name="Mol. Cell">
        <title>The ER-Localized Transmembrane Protein EPG-3/VMP1 Regulates SERCA Activity to Control ER-Isolation Membrane Contacts for Autophagosome Formation.</title>
        <authorList>
            <person name="Zhao Y.G."/>
            <person name="Chen Y."/>
            <person name="Miao G."/>
            <person name="Zhao H."/>
            <person name="Qu W."/>
            <person name="Li D."/>
            <person name="Wang Z."/>
            <person name="Liu N."/>
            <person name="Li L."/>
            <person name="Chen S."/>
            <person name="Liu P."/>
            <person name="Feng D."/>
            <person name="Zhang H."/>
        </authorList>
    </citation>
    <scope>INTERACTION WITH ATP2A2 AND WIPI2</scope>
</reference>
<reference key="35">
    <citation type="journal article" date="2017" name="Nat. Commun.">
        <title>A reversible phospho-switch mediated by ULK1 regulates the activity of autophagy protease ATG4B.</title>
        <authorList>
            <person name="Pengo N."/>
            <person name="Agrotis A."/>
            <person name="Prak K."/>
            <person name="Jones J."/>
            <person name="Ketteler R."/>
        </authorList>
    </citation>
    <scope>FUNCTION</scope>
    <scope>CATALYTIC ACTIVITY</scope>
    <scope>MUTAGENESIS OF LYS-46</scope>
</reference>
<reference key="36">
    <citation type="journal article" date="2017" name="Nat. Commun.">
        <title>WIPI3 and WIPI4 beta-propellers are scaffolds for LKB1-AMPK-TSC signalling circuits in the control of autophagy.</title>
        <authorList>
            <person name="Bakula D."/>
            <person name="Mueller A.J."/>
            <person name="Zuleger T."/>
            <person name="Takacs Z."/>
            <person name="Franz-Wachtel M."/>
            <person name="Thost A.K."/>
            <person name="Brigger D."/>
            <person name="Tschan M.P."/>
            <person name="Frickey T."/>
            <person name="Robenek H."/>
            <person name="Macek B."/>
            <person name="Proikas-Cezanne T."/>
        </authorList>
    </citation>
    <scope>INTERACTION WITH WDR45</scope>
</reference>
<reference key="37">
    <citation type="journal article" date="2018" name="EMBO Rep.">
        <title>The deubiquitinating enzyme USP20 stabilizes ULK1 and promotes autophagy initiation.</title>
        <authorList>
            <person name="Kim J.H."/>
            <person name="Seo D."/>
            <person name="Kim S.J."/>
            <person name="Choi D.W."/>
            <person name="Park J.S."/>
            <person name="Ha J."/>
            <person name="Choi J."/>
            <person name="Lee J.H."/>
            <person name="Jung S.M."/>
            <person name="Seo K.W."/>
            <person name="Lee E.W."/>
            <person name="Lee Y.S."/>
            <person name="Cheong H."/>
            <person name="Choi C.Y."/>
            <person name="Park S.H."/>
        </authorList>
    </citation>
    <scope>FUNCTION</scope>
    <scope>DEUBIQUITINATION BY USP20</scope>
</reference>
<reference key="38">
    <citation type="journal article" date="2019" name="Mol. Cell">
        <title>The ER-Localized Transmembrane Protein TMEM39A/SUSR2 Regulates Autophagy by Controlling the Trafficking of the PtdIns(4)P Phosphatase SAC1.</title>
        <authorList>
            <person name="Miao G."/>
            <person name="Zhang Y."/>
            <person name="Chen D."/>
            <person name="Zhang H."/>
        </authorList>
    </citation>
    <scope>INTERACTION WITH ATG13</scope>
</reference>
<reference key="39">
    <citation type="journal article" date="2019" name="Sci. Adv.">
        <title>Autophagy induction in atrophic muscle cells requires ULK1 activation by TRIM32 through unanchored K63-linked polyubiquitin chains.</title>
        <authorList>
            <person name="Di Rienzo M."/>
            <person name="Antonioli M."/>
            <person name="Fusco C."/>
            <person name="Liu Y."/>
            <person name="Mari M."/>
            <person name="Orhon I."/>
            <person name="Refolo G."/>
            <person name="Germani F."/>
            <person name="Corazzari M."/>
            <person name="Romagnoli A."/>
            <person name="Ciccosanti F."/>
            <person name="Mandriani B."/>
            <person name="Pellico M.T."/>
            <person name="De La Torre R."/>
            <person name="Ding H."/>
            <person name="Dentice M."/>
            <person name="Neri M."/>
            <person name="Ferlini A."/>
            <person name="Reggiori F."/>
            <person name="Kulesz-Martin M."/>
            <person name="Piacentini M."/>
            <person name="Merla G."/>
            <person name="Fimia G.M."/>
        </authorList>
    </citation>
    <scope>FUNCTION</scope>
    <scope>CATALYTIC ACTIVITY</scope>
    <scope>ACTIVITY REGULATION</scope>
    <scope>INTERACTION WITH AMBRA1</scope>
</reference>
<reference key="40">
    <citation type="journal article" date="2023" name="EMBO J.">
        <title>Phosphorylation of phase-separated p62 bodies by ULK1 activates a redox-independent stress response.</title>
        <authorList>
            <person name="Ikeda R."/>
            <person name="Noshiro D."/>
            <person name="Morishita H."/>
            <person name="Takada S."/>
            <person name="Kageyama S."/>
            <person name="Fujioka Y."/>
            <person name="Funakoshi T."/>
            <person name="Komatsu-Hirota S."/>
            <person name="Arai R."/>
            <person name="Ryzhii E."/>
            <person name="Abe M."/>
            <person name="Koga T."/>
            <person name="Motohashi H."/>
            <person name="Nakao M."/>
            <person name="Sakimura K."/>
            <person name="Horii A."/>
            <person name="Waguri S."/>
            <person name="Ichimura Y."/>
            <person name="Noda N.N."/>
            <person name="Komatsu M."/>
        </authorList>
    </citation>
    <scope>FUNCTION</scope>
    <scope>CATALYTIC ACTIVITY</scope>
</reference>
<reference key="41">
    <citation type="journal article" date="2007" name="Nature">
        <title>Patterns of somatic mutation in human cancer genomes.</title>
        <authorList>
            <person name="Greenman C."/>
            <person name="Stephens P."/>
            <person name="Smith R."/>
            <person name="Dalgliesh G.L."/>
            <person name="Hunter C."/>
            <person name="Bignell G."/>
            <person name="Davies H."/>
            <person name="Teague J."/>
            <person name="Butler A."/>
            <person name="Stevens C."/>
            <person name="Edkins S."/>
            <person name="O'Meara S."/>
            <person name="Vastrik I."/>
            <person name="Schmidt E.E."/>
            <person name="Avis T."/>
            <person name="Barthorpe S."/>
            <person name="Bhamra G."/>
            <person name="Buck G."/>
            <person name="Choudhury B."/>
            <person name="Clements J."/>
            <person name="Cole J."/>
            <person name="Dicks E."/>
            <person name="Forbes S."/>
            <person name="Gray K."/>
            <person name="Halliday K."/>
            <person name="Harrison R."/>
            <person name="Hills K."/>
            <person name="Hinton J."/>
            <person name="Jenkinson A."/>
            <person name="Jones D."/>
            <person name="Menzies A."/>
            <person name="Mironenko T."/>
            <person name="Perry J."/>
            <person name="Raine K."/>
            <person name="Richardson D."/>
            <person name="Shepherd R."/>
            <person name="Small A."/>
            <person name="Tofts C."/>
            <person name="Varian J."/>
            <person name="Webb T."/>
            <person name="West S."/>
            <person name="Widaa S."/>
            <person name="Yates A."/>
            <person name="Cahill D.P."/>
            <person name="Louis D.N."/>
            <person name="Goldstraw P."/>
            <person name="Nicholson A.G."/>
            <person name="Brasseur F."/>
            <person name="Looijenga L."/>
            <person name="Weber B.L."/>
            <person name="Chiew Y.-E."/>
            <person name="DeFazio A."/>
            <person name="Greaves M.F."/>
            <person name="Green A.R."/>
            <person name="Campbell P."/>
            <person name="Birney E."/>
            <person name="Easton D.F."/>
            <person name="Chenevix-Trench G."/>
            <person name="Tan M.-H."/>
            <person name="Khoo S.K."/>
            <person name="Teh B.T."/>
            <person name="Yuen S.T."/>
            <person name="Leung S.Y."/>
            <person name="Wooster R."/>
            <person name="Futreal P.A."/>
            <person name="Stratton M.R."/>
        </authorList>
    </citation>
    <scope>VARIANTS [LARGE SCALE ANALYSIS] MET-290; LEU-298; LEU-478; MET-503; LEU-665; LEU-714 AND CYS-784</scope>
</reference>
<name>ULK1_HUMAN</name>
<feature type="chain" id="PRO_0000086780" description="Serine/threonine-protein kinase ULK1">
    <location>
        <begin position="1"/>
        <end position="1050"/>
    </location>
</feature>
<feature type="domain" description="Protein kinase" evidence="3">
    <location>
        <begin position="16"/>
        <end position="278"/>
    </location>
</feature>
<feature type="region of interest" description="Disordered" evidence="5">
    <location>
        <begin position="283"/>
        <end position="358"/>
    </location>
</feature>
<feature type="region of interest" description="Interaction with GABARAP and GABARAPL2" evidence="6">
    <location>
        <begin position="287"/>
        <end position="416"/>
    </location>
</feature>
<feature type="region of interest" description="Disordered" evidence="5">
    <location>
        <begin position="393"/>
        <end position="608"/>
    </location>
</feature>
<feature type="region of interest" description="Disordered" evidence="5">
    <location>
        <begin position="728"/>
        <end position="791"/>
    </location>
</feature>
<feature type="region of interest" description="C-terminal domain; mediates interaction with SESN2" evidence="20">
    <location>
        <begin position="828"/>
        <end position="1050"/>
    </location>
</feature>
<feature type="compositionally biased region" description="Low complexity" evidence="5">
    <location>
        <begin position="295"/>
        <end position="317"/>
    </location>
</feature>
<feature type="compositionally biased region" description="Low complexity" evidence="5">
    <location>
        <begin position="410"/>
        <end position="425"/>
    </location>
</feature>
<feature type="compositionally biased region" description="Polar residues" evidence="5">
    <location>
        <begin position="436"/>
        <end position="459"/>
    </location>
</feature>
<feature type="compositionally biased region" description="Low complexity" evidence="5">
    <location>
        <begin position="775"/>
        <end position="786"/>
    </location>
</feature>
<feature type="active site" description="Proton acceptor" evidence="3 4">
    <location>
        <position position="138"/>
    </location>
</feature>
<feature type="binding site" evidence="3">
    <location>
        <begin position="22"/>
        <end position="30"/>
    </location>
    <ligand>
        <name>ATP</name>
        <dbReference type="ChEBI" id="CHEBI:30616"/>
    </ligand>
</feature>
<feature type="binding site" evidence="3 40">
    <location>
        <position position="46"/>
    </location>
    <ligand>
        <name>ATP</name>
        <dbReference type="ChEBI" id="CHEBI:30616"/>
    </ligand>
</feature>
<feature type="modified residue" description="N6-acetyllysine" evidence="2">
    <location>
        <position position="162"/>
    </location>
</feature>
<feature type="modified residue" description="Phosphoserine; by AMPK" evidence="24">
    <location>
        <position position="317"/>
    </location>
</feature>
<feature type="modified residue" description="Phosphoserine" evidence="48">
    <location>
        <position position="403"/>
    </location>
</feature>
<feature type="modified residue" description="Phosphoserine" evidence="43 45 46 47 48">
    <location>
        <position position="450"/>
    </location>
</feature>
<feature type="modified residue" description="Phosphothreonine" evidence="43 46">
    <location>
        <position position="456"/>
    </location>
</feature>
<feature type="modified residue" description="Phosphoserine" evidence="48">
    <location>
        <position position="467"/>
    </location>
</feature>
<feature type="modified residue" description="Phosphoserine" evidence="47 48">
    <location>
        <position position="469"/>
    </location>
</feature>
<feature type="modified residue" description="Phosphoserine" evidence="44 48">
    <location>
        <position position="477"/>
    </location>
</feature>
<feature type="modified residue" description="Phosphoserine" evidence="44 48">
    <location>
        <position position="479"/>
    </location>
</feature>
<feature type="modified residue" description="Phosphoserine" evidence="2">
    <location>
        <position position="522"/>
    </location>
</feature>
<feature type="modified residue" description="Phosphoserine; by AMPK" evidence="19 24 43 47 48">
    <location>
        <position position="556"/>
    </location>
</feature>
<feature type="modified residue" description="Phosphothreonine" evidence="2">
    <location>
        <position position="575"/>
    </location>
</feature>
<feature type="modified residue" description="N6-acetyllysine" evidence="2">
    <location>
        <position position="607"/>
    </location>
</feature>
<feature type="modified residue" description="Phosphothreonine" evidence="2">
    <location>
        <position position="636"/>
    </location>
</feature>
<feature type="modified residue" description="Phosphoserine" evidence="45 46 47 48">
    <location>
        <position position="638"/>
    </location>
</feature>
<feature type="modified residue" description="Phosphoserine" evidence="2">
    <location>
        <position position="639"/>
    </location>
</feature>
<feature type="modified residue" description="Phosphoserine; by MTOR" evidence="41 48">
    <location>
        <position position="758"/>
    </location>
</feature>
<feature type="modified residue" description="Phosphoserine" evidence="48">
    <location>
        <position position="775"/>
    </location>
</feature>
<feature type="sequence variant" id="VAR_041274" description="In an ovarian mucinous carcinoma sample; somatic mutation; dbSNP:rs370624303." evidence="7">
    <original>V</original>
    <variation>M</variation>
    <location>
        <position position="290"/>
    </location>
</feature>
<feature type="sequence variant" id="VAR_041275" description="In dbSNP:rs56364352." evidence="7">
    <original>S</original>
    <variation>L</variation>
    <location>
        <position position="298"/>
    </location>
</feature>
<feature type="sequence variant" id="VAR_041276" description="In dbSNP:rs12827141." evidence="7">
    <original>P</original>
    <variation>L</variation>
    <location>
        <position position="478"/>
    </location>
</feature>
<feature type="sequence variant" id="VAR_041277" description="In dbSNP:rs55824543." evidence="7">
    <original>T</original>
    <variation>M</variation>
    <location>
        <position position="503"/>
    </location>
</feature>
<feature type="sequence variant" id="VAR_041278" description="In dbSNP:rs55815560." evidence="7">
    <original>S</original>
    <variation>L</variation>
    <location>
        <position position="665"/>
    </location>
</feature>
<feature type="sequence variant" id="VAR_041279" description="In dbSNP:rs11546871." evidence="7">
    <original>P</original>
    <variation>L</variation>
    <location>
        <position position="714"/>
    </location>
</feature>
<feature type="sequence variant" id="VAR_041280" description="In a lung adenocarcinoma sample; somatic mutation." evidence="7">
    <original>S</original>
    <variation>C</variation>
    <location>
        <position position="784"/>
    </location>
</feature>
<feature type="sequence variant" id="VAR_054892" description="In dbSNP:rs11609348." evidence="34 35">
    <original>T</original>
    <variation>A</variation>
    <location>
        <position position="816"/>
    </location>
</feature>
<feature type="mutagenesis site" description="Abolished serine/threonine-protein kinase activity." evidence="12 28">
    <original>K</original>
    <variation>I</variation>
    <location>
        <position position="46"/>
    </location>
</feature>
<feature type="strand" evidence="49">
    <location>
        <begin position="9"/>
        <end position="11"/>
    </location>
</feature>
<feature type="strand" evidence="49">
    <location>
        <begin position="14"/>
        <end position="24"/>
    </location>
</feature>
<feature type="strand" evidence="49">
    <location>
        <begin position="29"/>
        <end position="37"/>
    </location>
</feature>
<feature type="strand" evidence="49">
    <location>
        <begin position="42"/>
        <end position="47"/>
    </location>
</feature>
<feature type="helix" evidence="49">
    <location>
        <begin position="50"/>
        <end position="52"/>
    </location>
</feature>
<feature type="helix" evidence="49">
    <location>
        <begin position="53"/>
        <end position="67"/>
    </location>
</feature>
<feature type="strand" evidence="49">
    <location>
        <begin position="78"/>
        <end position="83"/>
    </location>
</feature>
<feature type="strand" evidence="49">
    <location>
        <begin position="88"/>
        <end position="93"/>
    </location>
</feature>
<feature type="helix" evidence="49">
    <location>
        <begin position="100"/>
        <end position="106"/>
    </location>
</feature>
<feature type="helix" evidence="49">
    <location>
        <begin position="112"/>
        <end position="132"/>
    </location>
</feature>
<feature type="helix" evidence="49">
    <location>
        <begin position="141"/>
        <end position="143"/>
    </location>
</feature>
<feature type="strand" evidence="49">
    <location>
        <begin position="144"/>
        <end position="147"/>
    </location>
</feature>
<feature type="helix" evidence="50">
    <location>
        <begin position="151"/>
        <end position="153"/>
    </location>
</feature>
<feature type="helix" evidence="49">
    <location>
        <begin position="156"/>
        <end position="158"/>
    </location>
</feature>
<feature type="strand" evidence="49">
    <location>
        <begin position="160"/>
        <end position="163"/>
    </location>
</feature>
<feature type="turn" evidence="49">
    <location>
        <begin position="185"/>
        <end position="187"/>
    </location>
</feature>
<feature type="helix" evidence="49">
    <location>
        <begin position="190"/>
        <end position="193"/>
    </location>
</feature>
<feature type="helix" evidence="49">
    <location>
        <begin position="201"/>
        <end position="216"/>
    </location>
</feature>
<feature type="helix" evidence="49">
    <location>
        <begin position="226"/>
        <end position="235"/>
    </location>
</feature>
<feature type="helix" evidence="49">
    <location>
        <begin position="249"/>
        <end position="258"/>
    </location>
</feature>
<feature type="turn" evidence="49">
    <location>
        <begin position="263"/>
        <end position="265"/>
    </location>
</feature>
<feature type="helix" evidence="49">
    <location>
        <begin position="269"/>
        <end position="273"/>
    </location>
</feature>
<feature type="helix" evidence="49">
    <location>
        <begin position="276"/>
        <end position="278"/>
    </location>
</feature>
<feature type="strand" evidence="51">
    <location>
        <begin position="281"/>
        <end position="284"/>
    </location>
</feature>
<gene>
    <name evidence="37 42" type="primary">ULK1</name>
    <name evidence="38" type="synonym">KIAA0722</name>
</gene>
<proteinExistence type="evidence at protein level"/>
<comment type="function">
    <text evidence="6 8 12 14 15 18 20 21 28 30 31 33">Serine/threonine-protein kinase involved in autophagy in response to starvation (PubMed:18936157, PubMed:21460634, PubMed:21795849, PubMed:23524951, PubMed:25040165, PubMed:29487085, PubMed:31123703). Acts upstream of phosphatidylinositol 3-kinase PIK3C3 to regulate the formation of autophagophores, the precursors of autophagosomes (PubMed:18936157, PubMed:21460634, PubMed:21795849, PubMed:25040165). Part of regulatory feedback loops in autophagy: acts both as a downstream effector and negative regulator of mammalian target of rapamycin complex 1 (mTORC1) via interaction with RPTOR (PubMed:21795849). Activated via phosphorylation by AMPK and also acts as a regulator of AMPK by mediating phosphorylation of AMPK subunits PRKAA1, PRKAB2 and PRKAG1, leading to negatively regulate AMPK activity (PubMed:21460634). May phosphorylate ATG13/KIAA0652 and RPTOR; however such data need additional evidences (PubMed:18936157). Plays a role early in neuronal differentiation and is required for granule cell axon formation (PubMed:11146101). Also phosphorylates SESN2 and SQSTM1 to regulate autophagy (PubMed:25040165, PubMed:37306101). Phosphorylates FLCN, promoting autophagy (PubMed:25126726). Phosphorylates AMBRA1 in response to autophagy induction, releasing AMBRA1 from the cytoskeletal docking site to induce autophagosome nucleation (PubMed:20921139). Phosphorylates ATG4B, leading to inhibit autophagy by decreasing both proteolytic activation and delipidation activities of ATG4B (PubMed:28821708).</text>
</comment>
<comment type="catalytic activity">
    <reaction evidence="8 21 28 31 33">
        <text>L-seryl-[protein] + ATP = O-phospho-L-seryl-[protein] + ADP + H(+)</text>
        <dbReference type="Rhea" id="RHEA:17989"/>
        <dbReference type="Rhea" id="RHEA-COMP:9863"/>
        <dbReference type="Rhea" id="RHEA-COMP:11604"/>
        <dbReference type="ChEBI" id="CHEBI:15378"/>
        <dbReference type="ChEBI" id="CHEBI:29999"/>
        <dbReference type="ChEBI" id="CHEBI:30616"/>
        <dbReference type="ChEBI" id="CHEBI:83421"/>
        <dbReference type="ChEBI" id="CHEBI:456216"/>
        <dbReference type="EC" id="2.7.11.1"/>
    </reaction>
    <physiologicalReaction direction="left-to-right" evidence="8 21 31 33">
        <dbReference type="Rhea" id="RHEA:17990"/>
    </physiologicalReaction>
</comment>
<comment type="catalytic activity">
    <reaction evidence="8">
        <text>L-threonyl-[protein] + ATP = O-phospho-L-threonyl-[protein] + ADP + H(+)</text>
        <dbReference type="Rhea" id="RHEA:46608"/>
        <dbReference type="Rhea" id="RHEA-COMP:11060"/>
        <dbReference type="Rhea" id="RHEA-COMP:11605"/>
        <dbReference type="ChEBI" id="CHEBI:15378"/>
        <dbReference type="ChEBI" id="CHEBI:30013"/>
        <dbReference type="ChEBI" id="CHEBI:30616"/>
        <dbReference type="ChEBI" id="CHEBI:61977"/>
        <dbReference type="ChEBI" id="CHEBI:456216"/>
        <dbReference type="EC" id="2.7.11.1"/>
    </reaction>
    <physiologicalReaction direction="left-to-right" evidence="8">
        <dbReference type="Rhea" id="RHEA:46609"/>
    </physiologicalReaction>
</comment>
<comment type="activity regulation">
    <text evidence="2 31">Acetylation by KAT5/TIP60 stimulates the protein kinase activity (By similarity). The protein kinase activity is activated by unanchored 'Lys-63'-linked polyubiquitin chains: unanchored 'Lys-63'-linked polyubiquitin chains are catalyzed by TRIM32 in an AMBRA1-dependent manner (PubMed:31123703).</text>
</comment>
<comment type="subunit">
    <text evidence="6 8 9 10 11 15 16 17 20 22 23 24 25 26 27 29 31 32">Interacts with GABARAP and GABARAPL2 (PubMed:11146101). Interacts (via C-terminus) with ATG13 (PubMed:18936157). Part of a complex consisting of ATG13, ATG101, ULK1 and RB1CC1 (PubMed:19287211). Associates with the mammalian target of rapamycin complex 1 (mTORC1) through an interaction with RPTOR; the association depends on nutrient conditions and is reduced during starvation (PubMed:19211835, PubMed:21795849). Interacts with FEZ1; SCOC interferes with FEZ1-binding (PubMed:22354037). Interacts with TBC1D14 (PubMed:22613832). Interacts (phosphorylated form) with TRIM5 (PubMed:25127057). When phosphorylated at Ser-317, interacts with MEFV and BECN1 simultaneously (PubMed:26347139). Interacts with TRIM21 and IRF3, in the presence of TRIM21 (PubMed:26347139). Interacts with SESN2 (PubMed:25040165). Interacts with SQSTM1 (PubMed:25040165). Interacts with C9orf72 (PubMed:27334615). Interacts with WDR45 (PubMed:28561066). Interacts with ATG13; this interaction is increased in the absence of TMEM39A (PubMed:31806350). Interacts with WIPI2 (PubMed:28890335). Interacts with ATP2A2 (PubMed:28890335). Interacts with AMBRA1 (PubMed:25438055, PubMed:31123703). Interacts with IRGM; promoting the coassembly of ULK1 and BECN1 (PubMed:25891078).</text>
</comment>
<comment type="interaction">
    <interactant intactId="EBI-908831">
        <id>O75385</id>
    </interactant>
    <interactant intactId="EBI-2512975">
        <id>Q9C0C7</id>
        <label>AMBRA1</label>
    </interactant>
    <organismsDiffer>false</organismsDiffer>
    <experiments>3</experiments>
</comment>
<comment type="interaction">
    <interactant intactId="EBI-908831">
        <id>O75385</id>
    </interactant>
    <interactant intactId="EBI-16042318">
        <id>Q9C0C7-3</id>
        <label>AMBRA1</label>
    </interactant>
    <organismsDiffer>false</organismsDiffer>
    <experiments>4</experiments>
</comment>
<comment type="interaction">
    <interactant intactId="EBI-908831">
        <id>O75385</id>
    </interactant>
    <interactant intactId="EBI-2798775">
        <id>O75143</id>
        <label>ATG13</label>
    </interactant>
    <organismsDiffer>false</organismsDiffer>
    <experiments>15</experiments>
</comment>
<comment type="interaction">
    <interactant intactId="EBI-908831">
        <id>O75385</id>
    </interactant>
    <interactant intactId="EBI-16693635">
        <id>Q96LT7-1</id>
        <label>C9orf72</label>
    </interactant>
    <organismsDiffer>false</organismsDiffer>
    <experiments>5</experiments>
</comment>
<comment type="interaction">
    <interactant intactId="EBI-908831">
        <id>O75385</id>
    </interactant>
    <interactant intactId="EBI-16693673">
        <id>Q96LT7-2</id>
        <label>C9orf72</label>
    </interactant>
    <organismsDiffer>false</organismsDiffer>
    <experiments>4</experiments>
</comment>
<comment type="interaction">
    <interactant intactId="EBI-908831">
        <id>O75385</id>
    </interactant>
    <interactant intactId="EBI-746969">
        <id>Q9H0R8</id>
        <label>GABARAPL1</label>
    </interactant>
    <organismsDiffer>false</organismsDiffer>
    <experiments>3</experiments>
</comment>
<comment type="interaction">
    <interactant intactId="EBI-908831">
        <id>O75385</id>
    </interactant>
    <interactant intactId="EBI-720116">
        <id>P60520</id>
        <label>GABARAPL2</label>
    </interactant>
    <organismsDiffer>false</organismsDiffer>
    <experiments>4</experiments>
</comment>
<comment type="interaction">
    <interactant intactId="EBI-908831">
        <id>O75385</id>
    </interactant>
    <interactant intactId="EBI-466029">
        <id>P42858</id>
        <label>HTT</label>
    </interactant>
    <organismsDiffer>false</organismsDiffer>
    <experiments>8</experiments>
</comment>
<comment type="interaction">
    <interactant intactId="EBI-908831">
        <id>O75385</id>
    </interactant>
    <interactant intactId="EBI-373144">
        <id>Q9GZQ8</id>
        <label>MAP1LC3B</label>
    </interactant>
    <organismsDiffer>false</organismsDiffer>
    <experiments>3</experiments>
</comment>
<comment type="interaction">
    <interactant intactId="EBI-908831">
        <id>O75385</id>
    </interactant>
    <interactant intactId="EBI-2603996">
        <id>Q9BXW4</id>
        <label>MAP1LC3C</label>
    </interactant>
    <organismsDiffer>false</organismsDiffer>
    <experiments>4</experiments>
</comment>
<comment type="interaction">
    <interactant intactId="EBI-908831">
        <id>O75385</id>
    </interactant>
    <interactant intactId="EBI-359260">
        <id>P42345</id>
        <label>MTOR</label>
    </interactant>
    <organismsDiffer>false</organismsDiffer>
    <experiments>7</experiments>
</comment>
<comment type="interaction">
    <interactant intactId="EBI-908831">
        <id>O75385</id>
    </interactant>
    <interactant intactId="EBI-1028226">
        <id>P04629</id>
        <label>NTRK1</label>
    </interactant>
    <organismsDiffer>false</organismsDiffer>
    <experiments>2</experiments>
</comment>
<comment type="interaction">
    <interactant intactId="EBI-908831">
        <id>O75385</id>
    </interactant>
    <interactant intactId="EBI-717097">
        <id>O15530</id>
        <label>PDPK1</label>
    </interactant>
    <organismsDiffer>false</organismsDiffer>
    <experiments>2</experiments>
</comment>
<comment type="interaction">
    <interactant intactId="EBI-908831">
        <id>O75385</id>
    </interactant>
    <interactant intactId="EBI-1383852">
        <id>P54646</id>
        <label>PRKAA2</label>
    </interactant>
    <organismsDiffer>false</organismsDiffer>
    <experiments>2</experiments>
</comment>
<comment type="interaction">
    <interactant intactId="EBI-908831">
        <id>O75385</id>
    </interactant>
    <interactant intactId="EBI-719769">
        <id>Q9Y478</id>
        <label>PRKAB1</label>
    </interactant>
    <organismsDiffer>false</organismsDiffer>
    <experiments>3</experiments>
</comment>
<comment type="interaction">
    <interactant intactId="EBI-908831">
        <id>O75385</id>
    </interactant>
    <interactant intactId="EBI-1047793">
        <id>Q8TDY2</id>
        <label>RB1CC1</label>
    </interactant>
    <organismsDiffer>false</organismsDiffer>
    <experiments>13</experiments>
</comment>
<comment type="interaction">
    <interactant intactId="EBI-908831">
        <id>O75385</id>
    </interactant>
    <interactant intactId="EBI-1567928">
        <id>Q8N122</id>
        <label>RPTOR</label>
    </interactant>
    <organismsDiffer>false</organismsDiffer>
    <experiments>3</experiments>
</comment>
<comment type="interaction">
    <interactant intactId="EBI-908831">
        <id>O75385</id>
    </interactant>
    <interactant intactId="EBI-2797718">
        <id>Q9P2M4</id>
        <label>TBC1D14</label>
    </interactant>
    <organismsDiffer>false</organismsDiffer>
    <experiments>4</experiments>
</comment>
<comment type="interaction">
    <interactant intactId="EBI-908831">
        <id>O75385</id>
    </interactant>
    <interactant intactId="EBI-359276">
        <id>Q9Y4K3</id>
        <label>TRAF6</label>
    </interactant>
    <organismsDiffer>false</organismsDiffer>
    <experiments>2</experiments>
</comment>
<comment type="interaction">
    <interactant intactId="EBI-908831">
        <id>O75385</id>
    </interactant>
    <interactant intactId="EBI-908831">
        <id>O75385</id>
        <label>ULK1</label>
    </interactant>
    <organismsDiffer>false</organismsDiffer>
    <experiments>3</experiments>
</comment>
<comment type="subcellular location">
    <subcellularLocation>
        <location evidence="1">Cytoplasm</location>
        <location evidence="1">Cytosol</location>
    </subcellularLocation>
    <subcellularLocation>
        <location evidence="1">Preautophagosomal structure</location>
    </subcellularLocation>
    <text evidence="1">Under starvation conditions, is localized to puncate structures primarily representing the isolation membrane that sequesters a portion of the cytoplasm resulting in the formation of an autophagosome.</text>
</comment>
<comment type="tissue specificity">
    <text>Ubiquitously expressed. Detected in the following adult tissues: skeletal muscle, heart, pancreas, brain, placenta, liver, kidney, and lung.</text>
</comment>
<comment type="PTM">
    <text evidence="2 13 24">Autophosphorylated. Phosphorylated under nutrient-rich conditions; dephosphorylated during starvation or following treatment with rapamycin. Under nutrient sufficiency, phosphorylated by MTOR/mTOR, disrupting the interaction with AMPK and preventing activation of ULK1 (By similarity). In response to nutrient limitation, phosphorylated and activated by AMPK, leading to activate autophagy (PubMed:21205641, PubMed:25891078).</text>
</comment>
<comment type="PTM">
    <text evidence="18 30">Ubiquitinated via 'Lys-63'-linkage by a complex composed of AMBRA1 and TRAF6 following autophagy induction, promoting ULK1 stability and kinase activity. Deubiquitinated by USP20; leading to ULK1 stability and autophagy initiation (PubMed:29487085).</text>
</comment>
<comment type="PTM">
    <text evidence="2">Acetylated by KAT5/TIP60 under autophagy induction, promoting protein kinase activity.</text>
</comment>
<comment type="similarity">
    <text evidence="3">Belongs to the protein kinase superfamily. Ser/Thr protein kinase family. APG1/unc-51/ULK1 subfamily.</text>
</comment>
<comment type="sequence caution" evidence="39">
    <conflict type="erroneous initiation">
        <sequence resource="EMBL-CDS" id="BAA34442"/>
    </conflict>
    <text>Extended N-terminus.</text>
</comment>
<protein>
    <recommendedName>
        <fullName evidence="39">Serine/threonine-protein kinase ULK1</fullName>
        <ecNumber evidence="8 21 28 31 33">2.7.11.1</ecNumber>
    </recommendedName>
    <alternativeName>
        <fullName>Autophagy-related protein 1 homolog</fullName>
        <shortName>ATG1</shortName>
        <shortName evidence="36">hATG1</shortName>
    </alternativeName>
    <alternativeName>
        <fullName evidence="37">Unc-51-like kinase 1</fullName>
    </alternativeName>
</protein>
<dbReference type="EC" id="2.7.11.1" evidence="8 21 28 31 33"/>
<dbReference type="EMBL" id="AF045458">
    <property type="protein sequence ID" value="AAC32326.1"/>
    <property type="molecule type" value="mRNA"/>
</dbReference>
<dbReference type="EMBL" id="AB018265">
    <property type="protein sequence ID" value="BAA34442.2"/>
    <property type="status" value="ALT_INIT"/>
    <property type="molecule type" value="mRNA"/>
</dbReference>
<dbReference type="EMBL" id="AC131009">
    <property type="status" value="NOT_ANNOTATED_CDS"/>
    <property type="molecule type" value="Genomic_DNA"/>
</dbReference>
<dbReference type="CCDS" id="CCDS9274.1"/>
<dbReference type="RefSeq" id="NP_003556.2">
    <property type="nucleotide sequence ID" value="NM_003565.4"/>
</dbReference>
<dbReference type="PDB" id="4WNO">
    <property type="method" value="X-ray"/>
    <property type="resolution" value="1.56 A"/>
    <property type="chains" value="A=1-283"/>
</dbReference>
<dbReference type="PDB" id="4WNP">
    <property type="method" value="X-ray"/>
    <property type="resolution" value="1.88 A"/>
    <property type="chains" value="A/B/C/D=1-283"/>
</dbReference>
<dbReference type="PDB" id="5CI7">
    <property type="method" value="X-ray"/>
    <property type="resolution" value="1.74 A"/>
    <property type="chains" value="A=1-283"/>
</dbReference>
<dbReference type="PDB" id="6HYO">
    <property type="method" value="X-ray"/>
    <property type="resolution" value="1.07 A"/>
    <property type="chains" value="A=354-366"/>
</dbReference>
<dbReference type="PDB" id="6MNH">
    <property type="method" value="X-ray"/>
    <property type="resolution" value="1.73 A"/>
    <property type="chains" value="A=6-290"/>
</dbReference>
<dbReference type="PDB" id="6QAS">
    <property type="method" value="X-ray"/>
    <property type="resolution" value="1.75 A"/>
    <property type="chains" value="A/B=1-283"/>
</dbReference>
<dbReference type="PDB" id="8P5G">
    <property type="method" value="X-ray"/>
    <property type="resolution" value="2.02 A"/>
    <property type="chains" value="A/B=1-283"/>
</dbReference>
<dbReference type="PDB" id="8P5H">
    <property type="method" value="X-ray"/>
    <property type="resolution" value="1.94 A"/>
    <property type="chains" value="A/B=1-283"/>
</dbReference>
<dbReference type="PDB" id="8P5I">
    <property type="method" value="X-ray"/>
    <property type="resolution" value="1.83 A"/>
    <property type="chains" value="A/B/C/D=1-283"/>
</dbReference>
<dbReference type="PDB" id="8P5J">
    <property type="method" value="X-ray"/>
    <property type="resolution" value="2.16 A"/>
    <property type="chains" value="A/B=1-283"/>
</dbReference>
<dbReference type="PDB" id="8P5K">
    <property type="method" value="X-ray"/>
    <property type="resolution" value="2.21 A"/>
    <property type="chains" value="A/B/C/D=1-283"/>
</dbReference>
<dbReference type="PDB" id="8P5L">
    <property type="method" value="X-ray"/>
    <property type="resolution" value="1.84 A"/>
    <property type="chains" value="A/B=1-283"/>
</dbReference>
<dbReference type="PDB" id="8SOI">
    <property type="method" value="EM"/>
    <property type="resolution" value="4.20 A"/>
    <property type="chains" value="C=840-1044"/>
</dbReference>
<dbReference type="PDB" id="8SQZ">
    <property type="method" value="EM"/>
    <property type="resolution" value="5.85 A"/>
    <property type="chains" value="C/D=836-1050"/>
</dbReference>
<dbReference type="PDB" id="8SRM">
    <property type="method" value="EM"/>
    <property type="resolution" value="4.46 A"/>
    <property type="chains" value="C/D=836-1050"/>
</dbReference>
<dbReference type="PDB" id="8SV9">
    <property type="method" value="X-ray"/>
    <property type="resolution" value="2.30 A"/>
    <property type="chains" value="A/B=1-283"/>
</dbReference>
<dbReference type="PDB" id="9C82">
    <property type="method" value="EM"/>
    <property type="resolution" value="6.20 A"/>
    <property type="chains" value="C=840-1044"/>
</dbReference>
<dbReference type="PDB" id="9F32">
    <property type="method" value="X-ray"/>
    <property type="resolution" value="2.10 A"/>
    <property type="chains" value="A=1-283"/>
</dbReference>
<dbReference type="PDBsum" id="4WNO"/>
<dbReference type="PDBsum" id="4WNP"/>
<dbReference type="PDBsum" id="5CI7"/>
<dbReference type="PDBsum" id="6HYO"/>
<dbReference type="PDBsum" id="6MNH"/>
<dbReference type="PDBsum" id="6QAS"/>
<dbReference type="PDBsum" id="8P5G"/>
<dbReference type="PDBsum" id="8P5H"/>
<dbReference type="PDBsum" id="8P5I"/>
<dbReference type="PDBsum" id="8P5J"/>
<dbReference type="PDBsum" id="8P5K"/>
<dbReference type="PDBsum" id="8P5L"/>
<dbReference type="PDBsum" id="8SOI"/>
<dbReference type="PDBsum" id="8SQZ"/>
<dbReference type="PDBsum" id="8SRM"/>
<dbReference type="PDBsum" id="8SV9"/>
<dbReference type="PDBsum" id="9C82"/>
<dbReference type="PDBsum" id="9F32"/>
<dbReference type="EMDB" id="EMD-40658"/>
<dbReference type="EMDB" id="EMD-40715"/>
<dbReference type="EMDB" id="EMD-40735"/>
<dbReference type="EMDB" id="EMD-40738"/>
<dbReference type="SMR" id="O75385"/>
<dbReference type="BioGRID" id="113996">
    <property type="interactions" value="181"/>
</dbReference>
<dbReference type="ComplexPortal" id="CPX-373">
    <property type="entry name" value="ULK1-ATG13-RB1CC1-ATG101 autophagy initiation complex"/>
</dbReference>
<dbReference type="CORUM" id="O75385"/>
<dbReference type="DIP" id="DIP-35196N"/>
<dbReference type="FunCoup" id="O75385">
    <property type="interactions" value="1578"/>
</dbReference>
<dbReference type="IntAct" id="O75385">
    <property type="interactions" value="128"/>
</dbReference>
<dbReference type="MINT" id="O75385"/>
<dbReference type="STRING" id="9606.ENSP00000324560"/>
<dbReference type="BindingDB" id="O75385"/>
<dbReference type="ChEMBL" id="CHEMBL6006"/>
<dbReference type="DrugBank" id="DB12010">
    <property type="generic name" value="Fostamatinib"/>
</dbReference>
<dbReference type="DrugCentral" id="O75385"/>
<dbReference type="GuidetoPHARMACOLOGY" id="2271"/>
<dbReference type="GlyCosmos" id="O75385">
    <property type="glycosylation" value="1 site, 1 glycan"/>
</dbReference>
<dbReference type="GlyGen" id="O75385">
    <property type="glycosylation" value="7 sites, 1 O-linked glycan (2 sites)"/>
</dbReference>
<dbReference type="iPTMnet" id="O75385"/>
<dbReference type="PhosphoSitePlus" id="O75385"/>
<dbReference type="SwissPalm" id="O75385"/>
<dbReference type="BioMuta" id="ULK1"/>
<dbReference type="CPTAC" id="CPTAC-3098"/>
<dbReference type="CPTAC" id="CPTAC-3099"/>
<dbReference type="jPOST" id="O75385"/>
<dbReference type="MassIVE" id="O75385"/>
<dbReference type="PaxDb" id="9606-ENSP00000324560"/>
<dbReference type="PeptideAtlas" id="O75385"/>
<dbReference type="ProteomicsDB" id="49958"/>
<dbReference type="Pumba" id="O75385"/>
<dbReference type="Antibodypedia" id="31999">
    <property type="antibodies" value="906 antibodies from 39 providers"/>
</dbReference>
<dbReference type="DNASU" id="8408"/>
<dbReference type="Ensembl" id="ENST00000321867.6">
    <property type="protein sequence ID" value="ENSP00000324560.3"/>
    <property type="gene ID" value="ENSG00000177169.10"/>
</dbReference>
<dbReference type="GeneID" id="8408"/>
<dbReference type="KEGG" id="hsa:8408"/>
<dbReference type="MANE-Select" id="ENST00000321867.6">
    <property type="protein sequence ID" value="ENSP00000324560.3"/>
    <property type="RefSeq nucleotide sequence ID" value="NM_003565.4"/>
    <property type="RefSeq protein sequence ID" value="NP_003556.2"/>
</dbReference>
<dbReference type="UCSC" id="uc001uje.4">
    <property type="organism name" value="human"/>
</dbReference>
<dbReference type="AGR" id="HGNC:12558"/>
<dbReference type="CTD" id="8408"/>
<dbReference type="DisGeNET" id="8408"/>
<dbReference type="GeneCards" id="ULK1"/>
<dbReference type="HGNC" id="HGNC:12558">
    <property type="gene designation" value="ULK1"/>
</dbReference>
<dbReference type="HPA" id="ENSG00000177169">
    <property type="expression patterns" value="Low tissue specificity"/>
</dbReference>
<dbReference type="MIM" id="603168">
    <property type="type" value="gene"/>
</dbReference>
<dbReference type="neXtProt" id="NX_O75385"/>
<dbReference type="OpenTargets" id="ENSG00000177169"/>
<dbReference type="PharmGKB" id="PA37198"/>
<dbReference type="VEuPathDB" id="HostDB:ENSG00000177169"/>
<dbReference type="eggNOG" id="KOG0595">
    <property type="taxonomic scope" value="Eukaryota"/>
</dbReference>
<dbReference type="GeneTree" id="ENSGT00940000156664"/>
<dbReference type="HOGENOM" id="CLU_011264_0_0_1"/>
<dbReference type="InParanoid" id="O75385"/>
<dbReference type="OMA" id="PQPHQIT"/>
<dbReference type="OrthoDB" id="346907at2759"/>
<dbReference type="PAN-GO" id="O75385">
    <property type="GO annotations" value="13 GO annotations based on evolutionary models"/>
</dbReference>
<dbReference type="PhylomeDB" id="O75385"/>
<dbReference type="TreeFam" id="TF324551"/>
<dbReference type="BRENDA" id="2.7.11.1">
    <property type="organism ID" value="2681"/>
</dbReference>
<dbReference type="PathwayCommons" id="O75385"/>
<dbReference type="Reactome" id="R-HSA-1632852">
    <property type="pathway name" value="Macroautophagy"/>
</dbReference>
<dbReference type="Reactome" id="R-HSA-5357905">
    <property type="pathway name" value="Regulation of TNFR1 signaling"/>
</dbReference>
<dbReference type="Reactome" id="R-HSA-8854214">
    <property type="pathway name" value="TBC/RABGAPs"/>
</dbReference>
<dbReference type="Reactome" id="R-HSA-8876198">
    <property type="pathway name" value="RAB GEFs exchange GTP for GDP on RABs"/>
</dbReference>
<dbReference type="Reactome" id="R-HSA-8934903">
    <property type="pathway name" value="Receptor Mediated Mitophagy"/>
</dbReference>
<dbReference type="SignaLink" id="O75385"/>
<dbReference type="SIGNOR" id="O75385"/>
<dbReference type="BioGRID-ORCS" id="8408">
    <property type="hits" value="18 hits in 1202 CRISPR screens"/>
</dbReference>
<dbReference type="ChiTaRS" id="ULK1">
    <property type="organism name" value="human"/>
</dbReference>
<dbReference type="EvolutionaryTrace" id="O75385"/>
<dbReference type="GeneWiki" id="ULK1"/>
<dbReference type="GenomeRNAi" id="8408"/>
<dbReference type="Pharos" id="O75385">
    <property type="development level" value="Tchem"/>
</dbReference>
<dbReference type="PRO" id="PR:O75385"/>
<dbReference type="Proteomes" id="UP000005640">
    <property type="component" value="Chromosome 12"/>
</dbReference>
<dbReference type="RNAct" id="O75385">
    <property type="molecule type" value="protein"/>
</dbReference>
<dbReference type="Bgee" id="ENSG00000177169">
    <property type="expression patterns" value="Expressed in body of pancreas and 161 other cell types or tissues"/>
</dbReference>
<dbReference type="GO" id="GO:1990316">
    <property type="term" value="C:Atg1/ULK1 kinase complex"/>
    <property type="evidence" value="ECO:0000353"/>
    <property type="project" value="UniProtKB"/>
</dbReference>
<dbReference type="GO" id="GO:0005776">
    <property type="term" value="C:autophagosome"/>
    <property type="evidence" value="ECO:0000314"/>
    <property type="project" value="UniProtKB"/>
</dbReference>
<dbReference type="GO" id="GO:0000421">
    <property type="term" value="C:autophagosome membrane"/>
    <property type="evidence" value="ECO:0000314"/>
    <property type="project" value="UniProtKB"/>
</dbReference>
<dbReference type="GO" id="GO:0030424">
    <property type="term" value="C:axon"/>
    <property type="evidence" value="ECO:0007669"/>
    <property type="project" value="Ensembl"/>
</dbReference>
<dbReference type="GO" id="GO:0005737">
    <property type="term" value="C:cytoplasm"/>
    <property type="evidence" value="ECO:0000314"/>
    <property type="project" value="UniProt"/>
</dbReference>
<dbReference type="GO" id="GO:0005829">
    <property type="term" value="C:cytosol"/>
    <property type="evidence" value="ECO:0000314"/>
    <property type="project" value="UniProtKB"/>
</dbReference>
<dbReference type="GO" id="GO:0005789">
    <property type="term" value="C:endoplasmic reticulum membrane"/>
    <property type="evidence" value="ECO:0000304"/>
    <property type="project" value="Reactome"/>
</dbReference>
<dbReference type="GO" id="GO:0005741">
    <property type="term" value="C:mitochondrial outer membrane"/>
    <property type="evidence" value="ECO:0000304"/>
    <property type="project" value="Reactome"/>
</dbReference>
<dbReference type="GO" id="GO:1903349">
    <property type="term" value="C:omegasome membrane"/>
    <property type="evidence" value="ECO:0000314"/>
    <property type="project" value="UniProtKB"/>
</dbReference>
<dbReference type="GO" id="GO:0000407">
    <property type="term" value="C:phagophore assembly site"/>
    <property type="evidence" value="ECO:0000314"/>
    <property type="project" value="ComplexPortal"/>
</dbReference>
<dbReference type="GO" id="GO:0034045">
    <property type="term" value="C:phagophore assembly site membrane"/>
    <property type="evidence" value="ECO:0000314"/>
    <property type="project" value="UniProtKB"/>
</dbReference>
<dbReference type="GO" id="GO:0055037">
    <property type="term" value="C:recycling endosome"/>
    <property type="evidence" value="ECO:0000304"/>
    <property type="project" value="Reactome"/>
</dbReference>
<dbReference type="GO" id="GO:0005524">
    <property type="term" value="F:ATP binding"/>
    <property type="evidence" value="ECO:0007669"/>
    <property type="project" value="UniProtKB-KW"/>
</dbReference>
<dbReference type="GO" id="GO:0051020">
    <property type="term" value="F:GTPase binding"/>
    <property type="evidence" value="ECO:0000353"/>
    <property type="project" value="UniProtKB"/>
</dbReference>
<dbReference type="GO" id="GO:0042802">
    <property type="term" value="F:identical protein binding"/>
    <property type="evidence" value="ECO:0000353"/>
    <property type="project" value="IntAct"/>
</dbReference>
<dbReference type="GO" id="GO:0106310">
    <property type="term" value="F:protein serine kinase activity"/>
    <property type="evidence" value="ECO:0007669"/>
    <property type="project" value="RHEA"/>
</dbReference>
<dbReference type="GO" id="GO:0004674">
    <property type="term" value="F:protein serine/threonine kinase activity"/>
    <property type="evidence" value="ECO:0000314"/>
    <property type="project" value="UniProtKB"/>
</dbReference>
<dbReference type="GO" id="GO:0044877">
    <property type="term" value="F:protein-containing complex binding"/>
    <property type="evidence" value="ECO:0000353"/>
    <property type="project" value="UniProtKB"/>
</dbReference>
<dbReference type="GO" id="GO:0031267">
    <property type="term" value="F:small GTPase binding"/>
    <property type="evidence" value="ECO:0000353"/>
    <property type="project" value="BHF-UCL"/>
</dbReference>
<dbReference type="GO" id="GO:0000045">
    <property type="term" value="P:autophagosome assembly"/>
    <property type="evidence" value="ECO:0000314"/>
    <property type="project" value="UniProtKB"/>
</dbReference>
<dbReference type="GO" id="GO:0006914">
    <property type="term" value="P:autophagy"/>
    <property type="evidence" value="ECO:0000314"/>
    <property type="project" value="UniProtKB"/>
</dbReference>
<dbReference type="GO" id="GO:0048675">
    <property type="term" value="P:axon extension"/>
    <property type="evidence" value="ECO:0000318"/>
    <property type="project" value="GO_Central"/>
</dbReference>
<dbReference type="GO" id="GO:0031669">
    <property type="term" value="P:cellular response to nutrient levels"/>
    <property type="evidence" value="ECO:0000250"/>
    <property type="project" value="UniProtKB"/>
</dbReference>
<dbReference type="GO" id="GO:0033554">
    <property type="term" value="P:cellular response to stress"/>
    <property type="evidence" value="ECO:0000314"/>
    <property type="project" value="UniProt"/>
</dbReference>
<dbReference type="GO" id="GO:0016236">
    <property type="term" value="P:macroautophagy"/>
    <property type="evidence" value="ECO:0000315"/>
    <property type="project" value="BHF-UCL"/>
</dbReference>
<dbReference type="GO" id="GO:0000423">
    <property type="term" value="P:mitophagy"/>
    <property type="evidence" value="ECO:0000318"/>
    <property type="project" value="GO_Central"/>
</dbReference>
<dbReference type="GO" id="GO:0008285">
    <property type="term" value="P:negative regulation of cell population proliferation"/>
    <property type="evidence" value="ECO:0000314"/>
    <property type="project" value="ComplexPortal"/>
</dbReference>
<dbReference type="GO" id="GO:0048671">
    <property type="term" value="P:negative regulation of collateral sprouting"/>
    <property type="evidence" value="ECO:0000318"/>
    <property type="project" value="GO_Central"/>
</dbReference>
<dbReference type="GO" id="GO:0031333">
    <property type="term" value="P:negative regulation of protein-containing complex assembly"/>
    <property type="evidence" value="ECO:0000314"/>
    <property type="project" value="ParkinsonsUK-UCL"/>
</dbReference>
<dbReference type="GO" id="GO:0031175">
    <property type="term" value="P:neuron projection development"/>
    <property type="evidence" value="ECO:0000315"/>
    <property type="project" value="UniProtKB"/>
</dbReference>
<dbReference type="GO" id="GO:0031102">
    <property type="term" value="P:neuron projection regeneration"/>
    <property type="evidence" value="ECO:0007669"/>
    <property type="project" value="Ensembl"/>
</dbReference>
<dbReference type="GO" id="GO:0018105">
    <property type="term" value="P:peptidyl-serine phosphorylation"/>
    <property type="evidence" value="ECO:0000314"/>
    <property type="project" value="UniProtKB"/>
</dbReference>
<dbReference type="GO" id="GO:0034727">
    <property type="term" value="P:piecemeal microautophagy of the nucleus"/>
    <property type="evidence" value="ECO:0000318"/>
    <property type="project" value="GO_Central"/>
</dbReference>
<dbReference type="GO" id="GO:2000786">
    <property type="term" value="P:positive regulation of autophagosome assembly"/>
    <property type="evidence" value="ECO:0007669"/>
    <property type="project" value="Ensembl"/>
</dbReference>
<dbReference type="GO" id="GO:0010508">
    <property type="term" value="P:positive regulation of autophagy"/>
    <property type="evidence" value="ECO:0000314"/>
    <property type="project" value="UniProtKB"/>
</dbReference>
<dbReference type="GO" id="GO:0046777">
    <property type="term" value="P:protein autophosphorylation"/>
    <property type="evidence" value="ECO:0000314"/>
    <property type="project" value="UniProtKB"/>
</dbReference>
<dbReference type="GO" id="GO:0008104">
    <property type="term" value="P:protein localization"/>
    <property type="evidence" value="ECO:0000315"/>
    <property type="project" value="UniProtKB"/>
</dbReference>
<dbReference type="GO" id="GO:0006468">
    <property type="term" value="P:protein phosphorylation"/>
    <property type="evidence" value="ECO:0000303"/>
    <property type="project" value="UniProtKB"/>
</dbReference>
<dbReference type="GO" id="GO:0010506">
    <property type="term" value="P:regulation of autophagy"/>
    <property type="evidence" value="ECO:0000318"/>
    <property type="project" value="GO_Central"/>
</dbReference>
<dbReference type="GO" id="GO:0016241">
    <property type="term" value="P:regulation of macroautophagy"/>
    <property type="evidence" value="ECO:0000314"/>
    <property type="project" value="UniProtKB"/>
</dbReference>
<dbReference type="GO" id="GO:0010803">
    <property type="term" value="P:regulation of tumor necrosis factor-mediated signaling pathway"/>
    <property type="evidence" value="ECO:0000304"/>
    <property type="project" value="Reactome"/>
</dbReference>
<dbReference type="GO" id="GO:0042594">
    <property type="term" value="P:response to starvation"/>
    <property type="evidence" value="ECO:0000250"/>
    <property type="project" value="UniProtKB"/>
</dbReference>
<dbReference type="GO" id="GO:0061709">
    <property type="term" value="P:reticulophagy"/>
    <property type="evidence" value="ECO:0000318"/>
    <property type="project" value="GO_Central"/>
</dbReference>
<dbReference type="GO" id="GO:0007165">
    <property type="term" value="P:signal transduction"/>
    <property type="evidence" value="ECO:0007669"/>
    <property type="project" value="InterPro"/>
</dbReference>
<dbReference type="CDD" id="cd14202">
    <property type="entry name" value="STKc_ULK1"/>
    <property type="match status" value="1"/>
</dbReference>
<dbReference type="FunFam" id="1.10.510.10:FF:000128">
    <property type="entry name" value="serine/threonine-protein kinase ULK2 isoform X2"/>
    <property type="match status" value="1"/>
</dbReference>
<dbReference type="FunFam" id="3.30.200.20:FF:000149">
    <property type="entry name" value="serine/threonine-protein kinase unc-51 isoform X1"/>
    <property type="match status" value="1"/>
</dbReference>
<dbReference type="Gene3D" id="3.30.200.20">
    <property type="entry name" value="Phosphorylase Kinase, domain 1"/>
    <property type="match status" value="1"/>
</dbReference>
<dbReference type="Gene3D" id="1.10.510.10">
    <property type="entry name" value="Transferase(Phosphotransferase) domain 1"/>
    <property type="match status" value="1"/>
</dbReference>
<dbReference type="InterPro" id="IPR045269">
    <property type="entry name" value="Atg1-like"/>
</dbReference>
<dbReference type="InterPro" id="IPR048941">
    <property type="entry name" value="ATG1-like_MIT2"/>
</dbReference>
<dbReference type="InterPro" id="IPR022708">
    <property type="entry name" value="Atg1-like_tMIT"/>
</dbReference>
<dbReference type="InterPro" id="IPR011009">
    <property type="entry name" value="Kinase-like_dom_sf"/>
</dbReference>
<dbReference type="InterPro" id="IPR000719">
    <property type="entry name" value="Prot_kinase_dom"/>
</dbReference>
<dbReference type="InterPro" id="IPR017441">
    <property type="entry name" value="Protein_kinase_ATP_BS"/>
</dbReference>
<dbReference type="InterPro" id="IPR016237">
    <property type="entry name" value="Ser/Thr_kin_STPK_Ulk-1/2"/>
</dbReference>
<dbReference type="InterPro" id="IPR008271">
    <property type="entry name" value="Ser/Thr_kinase_AS"/>
</dbReference>
<dbReference type="PANTHER" id="PTHR24348">
    <property type="entry name" value="SERINE/THREONINE-PROTEIN KINASE UNC-51-RELATED"/>
    <property type="match status" value="1"/>
</dbReference>
<dbReference type="PANTHER" id="PTHR24348:SF19">
    <property type="entry name" value="SERINE_THREONINE-PROTEIN KINASE ULK1"/>
    <property type="match status" value="1"/>
</dbReference>
<dbReference type="Pfam" id="PF12063">
    <property type="entry name" value="ATG1-like_MIT1"/>
    <property type="match status" value="1"/>
</dbReference>
<dbReference type="Pfam" id="PF21127">
    <property type="entry name" value="ATG1-like_MIT2"/>
    <property type="match status" value="1"/>
</dbReference>
<dbReference type="Pfam" id="PF00069">
    <property type="entry name" value="Pkinase"/>
    <property type="match status" value="1"/>
</dbReference>
<dbReference type="PIRSF" id="PIRSF000580">
    <property type="entry name" value="Ser/Thr_PK_STPK_ULK-1/2"/>
    <property type="match status" value="1"/>
</dbReference>
<dbReference type="SMART" id="SM00220">
    <property type="entry name" value="S_TKc"/>
    <property type="match status" value="1"/>
</dbReference>
<dbReference type="SUPFAM" id="SSF56112">
    <property type="entry name" value="Protein kinase-like (PK-like)"/>
    <property type="match status" value="1"/>
</dbReference>
<dbReference type="PROSITE" id="PS00107">
    <property type="entry name" value="PROTEIN_KINASE_ATP"/>
    <property type="match status" value="1"/>
</dbReference>
<dbReference type="PROSITE" id="PS50011">
    <property type="entry name" value="PROTEIN_KINASE_DOM"/>
    <property type="match status" value="1"/>
</dbReference>
<dbReference type="PROSITE" id="PS00108">
    <property type="entry name" value="PROTEIN_KINASE_ST"/>
    <property type="match status" value="1"/>
</dbReference>
<accession>O75385</accession>
<accession>Q9UQ28</accession>
<sequence length="1050" mass="112631">MEPGRGGTETVGKFEFSRKDLIGHGAFAVVFKGRHREKHDLEVAVKCINKKNLAKSQTLLGKEIKILKELKHENIVALYDFQEMANSVYLVMEYCNGGDLADYLHAMRTLSEDTIRLFLQQIAGAMRLLHSKGIIHRDLKPQNILLSNPAGRRANPNSIRVKIADFGFARYLQSNMMAATLCGSPMYMAPEVIMSQHYDGKADLWSIGTIVYQCLTGKAPFQASSPQDLRLFYEKNKTLVPTIPRETSAPLRQLLLALLQRNHKDRMDFDEFFHHPFLDASPSVRKSPPVPVPSYPSSGSGSSSSSSSTSHLASPPSLGEMQQLQKTLASPADTAGFLHSSRDSGGSKDSSCDTDDFVMVPAQFPGDLVAEAPSAKPPPDSLMCSGSSLVASAGLESHGRTPSPSPPCSSSPSPSGRAGPFSSSRCGASVPIPVPTQVQNYQRIERNLQSPTQFQTPRSSAIRRSGSTSPLGFARASPSPPAHAEHGGVLARKMSLGGGRPYTPSPQVGTIPERPGWSGTPSPQGAEMRGGRSPRPGSSAPEHSPRTSGLGCRLHSAPNLSDLHVVRPKLPKPPTDPLGAVFSPPQASPPQPSHGLQSCRNLRGSPKLPDFLQRNPLPPILGSPTKAVPSFDFPKTPSSQNLLALLARQGVVMTPPRNRTLPDLSEVGPFHGQPLGPGLRPGEDPKGPFGRSFSTSRLTDLLLKAAFGTQAPDPGSTESLQEKPMEIAPSAGFGGSLHPGARAGGTSSPSPVVFTVGSPPSGSTPPQGPRTRMFSAGPTGSASSSARHLVPGPCSEAPAPELPAPGHGCSFADPITANLEGAVTFEAPDLPEETLMEQEHTEILRGLRFTLLFVQHVLEIAALKGSASEAAGGPEYQLQESVVADQISLLSREWGFAEQLVLYLKVAELLSSGLQSAIDQIRAGKLCLSSTVKQVVRRLNELYKASVVSCQGLSLRLQRFFLDKQRLLDRIHSITAERLIFSHAVQMVQSAALDEMFQHREGCVPRYHKALLLLEGLQHMLSDQADIENVTKCKLCIERRLSALLTGICA</sequence>